<accession>B4TUM3</accession>
<gene>
    <name evidence="1" type="primary">mutH</name>
    <name type="ordered locus">SeSA_A3169</name>
</gene>
<name>MUTH_SALSV</name>
<reference key="1">
    <citation type="journal article" date="2011" name="J. Bacteriol.">
        <title>Comparative genomics of 28 Salmonella enterica isolates: evidence for CRISPR-mediated adaptive sublineage evolution.</title>
        <authorList>
            <person name="Fricke W.F."/>
            <person name="Mammel M.K."/>
            <person name="McDermott P.F."/>
            <person name="Tartera C."/>
            <person name="White D.G."/>
            <person name="Leclerc J.E."/>
            <person name="Ravel J."/>
            <person name="Cebula T.A."/>
        </authorList>
    </citation>
    <scope>NUCLEOTIDE SEQUENCE [LARGE SCALE GENOMIC DNA]</scope>
    <source>
        <strain>CVM19633</strain>
    </source>
</reference>
<protein>
    <recommendedName>
        <fullName evidence="1">DNA mismatch repair protein MutH</fullName>
    </recommendedName>
    <alternativeName>
        <fullName evidence="1">Methyl-directed mismatch repair protein</fullName>
    </alternativeName>
</protein>
<proteinExistence type="inferred from homology"/>
<keyword id="KW-0963">Cytoplasm</keyword>
<keyword id="KW-0227">DNA damage</keyword>
<keyword id="KW-0234">DNA repair</keyword>
<keyword id="KW-0255">Endonuclease</keyword>
<keyword id="KW-0378">Hydrolase</keyword>
<keyword id="KW-0540">Nuclease</keyword>
<sequence>MSALCPLLTPPASEALLLAQARQLSGYTLGELAAMAGITTPKDLKRDKGWIGVLLEIWLGASAGSKPEQDFAALGVELKTIPVDSLGRPLETTFVCVAPLTGNSGVTWETSHVRHKLKRVLWVPVEGDRSIPLAERRVGSPLLWSPSEEEDRQLRLDWEELMDMIVLGQVERITARHGEVLQLRPKAANARALTEAIGARGEPILTLPRGFYLKKNFTQALLARHFLLQNP</sequence>
<dbReference type="EMBL" id="CP001127">
    <property type="protein sequence ID" value="ACF90311.1"/>
    <property type="molecule type" value="Genomic_DNA"/>
</dbReference>
<dbReference type="RefSeq" id="WP_001274930.1">
    <property type="nucleotide sequence ID" value="NC_011094.1"/>
</dbReference>
<dbReference type="SMR" id="B4TUM3"/>
<dbReference type="KEGG" id="sew:SeSA_A3169"/>
<dbReference type="HOGENOM" id="CLU_086669_0_0_6"/>
<dbReference type="Proteomes" id="UP000001865">
    <property type="component" value="Chromosome"/>
</dbReference>
<dbReference type="GO" id="GO:0005737">
    <property type="term" value="C:cytoplasm"/>
    <property type="evidence" value="ECO:0007669"/>
    <property type="project" value="UniProtKB-SubCell"/>
</dbReference>
<dbReference type="GO" id="GO:0003677">
    <property type="term" value="F:DNA binding"/>
    <property type="evidence" value="ECO:0007669"/>
    <property type="project" value="InterPro"/>
</dbReference>
<dbReference type="GO" id="GO:0004519">
    <property type="term" value="F:endonuclease activity"/>
    <property type="evidence" value="ECO:0007669"/>
    <property type="project" value="UniProtKB-UniRule"/>
</dbReference>
<dbReference type="GO" id="GO:0006304">
    <property type="term" value="P:DNA modification"/>
    <property type="evidence" value="ECO:0007669"/>
    <property type="project" value="InterPro"/>
</dbReference>
<dbReference type="GO" id="GO:0006298">
    <property type="term" value="P:mismatch repair"/>
    <property type="evidence" value="ECO:0007669"/>
    <property type="project" value="UniProtKB-UniRule"/>
</dbReference>
<dbReference type="CDD" id="cd00583">
    <property type="entry name" value="MutH-like"/>
    <property type="match status" value="1"/>
</dbReference>
<dbReference type="FunFam" id="3.40.600.10:FF:000001">
    <property type="entry name" value="DNA mismatch repair protein MutH"/>
    <property type="match status" value="1"/>
</dbReference>
<dbReference type="Gene3D" id="3.40.600.10">
    <property type="entry name" value="DNA mismatch repair MutH/Restriction endonuclease, type II"/>
    <property type="match status" value="1"/>
</dbReference>
<dbReference type="HAMAP" id="MF_00759">
    <property type="entry name" value="MutH"/>
    <property type="match status" value="1"/>
</dbReference>
<dbReference type="InterPro" id="IPR004230">
    <property type="entry name" value="DNA_mismatch_repair_MutH"/>
</dbReference>
<dbReference type="InterPro" id="IPR011337">
    <property type="entry name" value="DNA_rep_MutH/RE_typeII_Sau3AI"/>
</dbReference>
<dbReference type="InterPro" id="IPR037057">
    <property type="entry name" value="DNA_rep_MutH/T2_RE_sf"/>
</dbReference>
<dbReference type="InterPro" id="IPR011335">
    <property type="entry name" value="Restrct_endonuc-II-like"/>
</dbReference>
<dbReference type="NCBIfam" id="TIGR02248">
    <property type="entry name" value="mutH_TIGR"/>
    <property type="match status" value="1"/>
</dbReference>
<dbReference type="NCBIfam" id="NF003458">
    <property type="entry name" value="PRK05070.1"/>
    <property type="match status" value="1"/>
</dbReference>
<dbReference type="Pfam" id="PF02976">
    <property type="entry name" value="MutH"/>
    <property type="match status" value="1"/>
</dbReference>
<dbReference type="SMART" id="SM00927">
    <property type="entry name" value="MutH"/>
    <property type="match status" value="1"/>
</dbReference>
<dbReference type="SUPFAM" id="SSF52980">
    <property type="entry name" value="Restriction endonuclease-like"/>
    <property type="match status" value="1"/>
</dbReference>
<evidence type="ECO:0000255" key="1">
    <source>
        <dbReference type="HAMAP-Rule" id="MF_00759"/>
    </source>
</evidence>
<feature type="chain" id="PRO_1000133476" description="DNA mismatch repair protein MutH">
    <location>
        <begin position="1"/>
        <end position="231"/>
    </location>
</feature>
<comment type="function">
    <text evidence="1">Sequence-specific endonuclease that cleaves unmethylated GATC sequences. It is involved in DNA mismatch repair.</text>
</comment>
<comment type="subcellular location">
    <subcellularLocation>
        <location evidence="1">Cytoplasm</location>
    </subcellularLocation>
</comment>
<comment type="similarity">
    <text evidence="1">Belongs to the MutH family.</text>
</comment>
<organism>
    <name type="scientific">Salmonella schwarzengrund (strain CVM19633)</name>
    <dbReference type="NCBI Taxonomy" id="439843"/>
    <lineage>
        <taxon>Bacteria</taxon>
        <taxon>Pseudomonadati</taxon>
        <taxon>Pseudomonadota</taxon>
        <taxon>Gammaproteobacteria</taxon>
        <taxon>Enterobacterales</taxon>
        <taxon>Enterobacteriaceae</taxon>
        <taxon>Salmonella</taxon>
    </lineage>
</organism>